<name>GPC5D_HUMAN</name>
<gene>
    <name type="primary">GPRC5D</name>
</gene>
<protein>
    <recommendedName>
        <fullName>G-protein coupled receptor family C group 5 member D</fullName>
    </recommendedName>
</protein>
<dbReference type="EMBL" id="AF209923">
    <property type="protein sequence ID" value="AAF72873.1"/>
    <property type="molecule type" value="mRNA"/>
</dbReference>
<dbReference type="EMBL" id="AB099817">
    <property type="protein sequence ID" value="BAC79169.1"/>
    <property type="molecule type" value="mRNA"/>
</dbReference>
<dbReference type="EMBL" id="AB083629">
    <property type="protein sequence ID" value="BAB89342.1"/>
    <property type="molecule type" value="Genomic_DNA"/>
</dbReference>
<dbReference type="EMBL" id="BC069341">
    <property type="protein sequence ID" value="AAH69341.1"/>
    <property type="molecule type" value="mRNA"/>
</dbReference>
<dbReference type="EMBL" id="BC107077">
    <property type="protein sequence ID" value="AAI07078.1"/>
    <property type="molecule type" value="mRNA"/>
</dbReference>
<dbReference type="EMBL" id="BC107078">
    <property type="protein sequence ID" value="AAI07079.1"/>
    <property type="molecule type" value="mRNA"/>
</dbReference>
<dbReference type="CCDS" id="CCDS8658.1">
    <molecule id="Q9NZD1-1"/>
</dbReference>
<dbReference type="RefSeq" id="NP_061124.1">
    <molecule id="Q9NZD1-1"/>
    <property type="nucleotide sequence ID" value="NM_018654.2"/>
</dbReference>
<dbReference type="RefSeq" id="XP_005253478.1">
    <property type="nucleotide sequence ID" value="XM_005253421.3"/>
</dbReference>
<dbReference type="RefSeq" id="XP_016875071.1">
    <property type="nucleotide sequence ID" value="XM_017019582.1"/>
</dbReference>
<dbReference type="RefSeq" id="XP_016875072.1">
    <molecule id="Q9NZD1-2"/>
    <property type="nucleotide sequence ID" value="XM_017019583.3"/>
</dbReference>
<dbReference type="RefSeq" id="XP_054228435.1">
    <molecule id="Q9NZD1-1"/>
    <property type="nucleotide sequence ID" value="XM_054372460.1"/>
</dbReference>
<dbReference type="RefSeq" id="XP_054228436.1">
    <molecule id="Q9NZD1-2"/>
    <property type="nucleotide sequence ID" value="XM_054372461.1"/>
</dbReference>
<dbReference type="PDB" id="8YZK">
    <property type="method" value="EM"/>
    <property type="resolution" value="3.40 A"/>
    <property type="chains" value="A/B=1-268"/>
</dbReference>
<dbReference type="PDB" id="9IMA">
    <property type="method" value="EM"/>
    <property type="resolution" value="2.65 A"/>
    <property type="chains" value="A/B=1-308"/>
</dbReference>
<dbReference type="PDBsum" id="8YZK"/>
<dbReference type="PDBsum" id="9IMA"/>
<dbReference type="EMDB" id="EMD-39696"/>
<dbReference type="EMDB" id="EMD-60686"/>
<dbReference type="SMR" id="Q9NZD1"/>
<dbReference type="BioGRID" id="120687">
    <property type="interactions" value="73"/>
</dbReference>
<dbReference type="CORUM" id="Q9NZD1"/>
<dbReference type="FunCoup" id="Q9NZD1">
    <property type="interactions" value="21"/>
</dbReference>
<dbReference type="IntAct" id="Q9NZD1">
    <property type="interactions" value="66"/>
</dbReference>
<dbReference type="STRING" id="9606.ENSP00000228887"/>
<dbReference type="ChEMBL" id="CHEMBL4523925"/>
<dbReference type="DrugBank" id="DB16678">
    <property type="generic name" value="Talquetamab"/>
</dbReference>
<dbReference type="DrugCentral" id="Q9NZD1"/>
<dbReference type="iPTMnet" id="Q9NZD1"/>
<dbReference type="PhosphoSitePlus" id="Q9NZD1"/>
<dbReference type="BioMuta" id="GPRC5D"/>
<dbReference type="DMDM" id="46396015"/>
<dbReference type="jPOST" id="Q9NZD1"/>
<dbReference type="MassIVE" id="Q9NZD1"/>
<dbReference type="PaxDb" id="9606-ENSP00000228887"/>
<dbReference type="PeptideAtlas" id="Q9NZD1"/>
<dbReference type="ProteomicsDB" id="83372">
    <molecule id="Q9NZD1-1"/>
</dbReference>
<dbReference type="ProteomicsDB" id="83373">
    <molecule id="Q9NZD1-2"/>
</dbReference>
<dbReference type="ProteomicsDB" id="83374">
    <molecule id="Q9NZD1-3"/>
</dbReference>
<dbReference type="ABCD" id="Q9NZD1">
    <property type="antibodies" value="32 sequenced antibodies"/>
</dbReference>
<dbReference type="Antibodypedia" id="11949">
    <property type="antibodies" value="259 antibodies from 30 providers"/>
</dbReference>
<dbReference type="DNASU" id="55507"/>
<dbReference type="Ensembl" id="ENST00000228887.6">
    <molecule id="Q9NZD1-1"/>
    <property type="protein sequence ID" value="ENSP00000228887.1"/>
    <property type="gene ID" value="ENSG00000111291.9"/>
</dbReference>
<dbReference type="Ensembl" id="ENST00000396333.3">
    <molecule id="Q9NZD1-2"/>
    <property type="protein sequence ID" value="ENSP00000379624.3"/>
    <property type="gene ID" value="ENSG00000111291.9"/>
</dbReference>
<dbReference type="GeneID" id="55507"/>
<dbReference type="KEGG" id="hsa:55507"/>
<dbReference type="MANE-Select" id="ENST00000228887.6">
    <property type="protein sequence ID" value="ENSP00000228887.1"/>
    <property type="RefSeq nucleotide sequence ID" value="NM_018654.2"/>
    <property type="RefSeq protein sequence ID" value="NP_061124.1"/>
</dbReference>
<dbReference type="UCSC" id="uc010shp.2">
    <molecule id="Q9NZD1-1"/>
    <property type="organism name" value="human"/>
</dbReference>
<dbReference type="AGR" id="HGNC:13310"/>
<dbReference type="CTD" id="55507"/>
<dbReference type="DisGeNET" id="55507"/>
<dbReference type="GeneCards" id="GPRC5D"/>
<dbReference type="HGNC" id="HGNC:13310">
    <property type="gene designation" value="GPRC5D"/>
</dbReference>
<dbReference type="HPA" id="ENSG00000111291">
    <property type="expression patterns" value="Tissue enriched (skin)"/>
</dbReference>
<dbReference type="MIM" id="607437">
    <property type="type" value="gene"/>
</dbReference>
<dbReference type="neXtProt" id="NX_Q9NZD1"/>
<dbReference type="OpenTargets" id="ENSG00000111291"/>
<dbReference type="PharmGKB" id="PA28940"/>
<dbReference type="VEuPathDB" id="HostDB:ENSG00000111291"/>
<dbReference type="eggNOG" id="ENOG502SKRS">
    <property type="taxonomic scope" value="Eukaryota"/>
</dbReference>
<dbReference type="GeneTree" id="ENSGT00950000182961"/>
<dbReference type="HOGENOM" id="CLU_044162_0_1_1"/>
<dbReference type="InParanoid" id="Q9NZD1"/>
<dbReference type="OMA" id="QEYFIPR"/>
<dbReference type="OrthoDB" id="8701926at2759"/>
<dbReference type="PAN-GO" id="Q9NZD1">
    <property type="GO annotations" value="5 GO annotations based on evolutionary models"/>
</dbReference>
<dbReference type="PhylomeDB" id="Q9NZD1"/>
<dbReference type="TreeFam" id="TF321410"/>
<dbReference type="PathwayCommons" id="Q9NZD1"/>
<dbReference type="SignaLink" id="Q9NZD1"/>
<dbReference type="BioGRID-ORCS" id="55507">
    <property type="hits" value="10 hits in 1141 CRISPR screens"/>
</dbReference>
<dbReference type="GeneWiki" id="GPRC5D"/>
<dbReference type="GenomeRNAi" id="55507"/>
<dbReference type="Pharos" id="Q9NZD1">
    <property type="development level" value="Tbio"/>
</dbReference>
<dbReference type="PRO" id="PR:Q9NZD1"/>
<dbReference type="Proteomes" id="UP000005640">
    <property type="component" value="Chromosome 12"/>
</dbReference>
<dbReference type="RNAct" id="Q9NZD1">
    <property type="molecule type" value="protein"/>
</dbReference>
<dbReference type="Bgee" id="ENSG00000111291">
    <property type="expression patterns" value="Expressed in male germ line stem cell (sensu Vertebrata) in testis and 99 other cell types or tissues"/>
</dbReference>
<dbReference type="ExpressionAtlas" id="Q9NZD1">
    <property type="expression patterns" value="baseline and differential"/>
</dbReference>
<dbReference type="GO" id="GO:0070062">
    <property type="term" value="C:extracellular exosome"/>
    <property type="evidence" value="ECO:0000318"/>
    <property type="project" value="GO_Central"/>
</dbReference>
<dbReference type="GO" id="GO:0043231">
    <property type="term" value="C:intracellular membrane-bounded organelle"/>
    <property type="evidence" value="ECO:0000318"/>
    <property type="project" value="GO_Central"/>
</dbReference>
<dbReference type="GO" id="GO:0005886">
    <property type="term" value="C:plasma membrane"/>
    <property type="evidence" value="ECO:0000318"/>
    <property type="project" value="GO_Central"/>
</dbReference>
<dbReference type="GO" id="GO:0043235">
    <property type="term" value="C:receptor complex"/>
    <property type="evidence" value="ECO:0000318"/>
    <property type="project" value="GO_Central"/>
</dbReference>
<dbReference type="GO" id="GO:0004930">
    <property type="term" value="F:G protein-coupled receptor activity"/>
    <property type="evidence" value="ECO:0007669"/>
    <property type="project" value="UniProtKB-KW"/>
</dbReference>
<dbReference type="GO" id="GO:0030295">
    <property type="term" value="F:protein kinase activator activity"/>
    <property type="evidence" value="ECO:0000318"/>
    <property type="project" value="GO_Central"/>
</dbReference>
<dbReference type="InterPro" id="IPR017978">
    <property type="entry name" value="GPCR_3_C"/>
</dbReference>
<dbReference type="InterPro" id="IPR051753">
    <property type="entry name" value="RA-inducible_GPCR3"/>
</dbReference>
<dbReference type="PANTHER" id="PTHR14511">
    <property type="entry name" value="G PROTEIN COUPLED RECEPTOR, CLASS C, GROUP 5"/>
    <property type="match status" value="1"/>
</dbReference>
<dbReference type="PANTHER" id="PTHR14511:SF16">
    <property type="entry name" value="G-PROTEIN COUPLED RECEPTOR FAMILY C GROUP 5 MEMBER D"/>
    <property type="match status" value="1"/>
</dbReference>
<dbReference type="Pfam" id="PF00003">
    <property type="entry name" value="7tm_3"/>
    <property type="match status" value="1"/>
</dbReference>
<comment type="function">
    <text evidence="2">G-protein coupled receptor involved in hard keratin expression and likely plays a role in the development of hair and nails.</text>
</comment>
<comment type="subunit">
    <text evidence="3 4">Homodimer.</text>
</comment>
<comment type="interaction">
    <interactant intactId="EBI-13067820">
        <id>Q9NZD1</id>
    </interactant>
    <interactant intactId="EBI-11976321">
        <id>O95236-2</id>
        <label>APOL3</label>
    </interactant>
    <organismsDiffer>false</organismsDiffer>
    <experiments>3</experiments>
</comment>
<comment type="interaction">
    <interactant intactId="EBI-13067820">
        <id>Q9NZD1</id>
    </interactant>
    <interactant intactId="EBI-8648738">
        <id>Q8WVV5</id>
        <label>BTN2A2</label>
    </interactant>
    <organismsDiffer>false</organismsDiffer>
    <experiments>3</experiments>
</comment>
<comment type="interaction">
    <interactant intactId="EBI-13067820">
        <id>Q9NZD1</id>
    </interactant>
    <interactant intactId="EBI-2873970">
        <id>P13236</id>
        <label>CCL4</label>
    </interactant>
    <organismsDiffer>false</organismsDiffer>
    <experiments>3</experiments>
</comment>
<comment type="interaction">
    <interactant intactId="EBI-13067820">
        <id>Q9NZD1</id>
    </interactant>
    <interactant intactId="EBI-4319440">
        <id>P54849</id>
        <label>EMP1</label>
    </interactant>
    <organismsDiffer>false</organismsDiffer>
    <experiments>3</experiments>
</comment>
<comment type="interaction">
    <interactant intactId="EBI-13067820">
        <id>Q9NZD1</id>
    </interactant>
    <interactant intactId="EBI-10976398">
        <id>Q7Z2K6</id>
        <label>ERMP1</label>
    </interactant>
    <organismsDiffer>false</organismsDiffer>
    <experiments>3</experiments>
</comment>
<comment type="interaction">
    <interactant intactId="EBI-13067820">
        <id>Q9NZD1</id>
    </interactant>
    <interactant intactId="EBI-12175685">
        <id>Q14802-3</id>
        <label>FXYD3</label>
    </interactant>
    <organismsDiffer>false</organismsDiffer>
    <experiments>3</experiments>
</comment>
<comment type="interaction">
    <interactant intactId="EBI-13067820">
        <id>Q9NZD1</id>
    </interactant>
    <interactant intactId="EBI-702665">
        <id>P02724</id>
        <label>GYPA</label>
    </interactant>
    <organismsDiffer>false</organismsDiffer>
    <experiments>3</experiments>
</comment>
<comment type="interaction">
    <interactant intactId="EBI-13067820">
        <id>Q9NZD1</id>
    </interactant>
    <interactant intactId="EBI-7932862">
        <id>Q01628</id>
        <label>IFITM3</label>
    </interactant>
    <organismsDiffer>false</organismsDiffer>
    <experiments>3</experiments>
</comment>
<comment type="interaction">
    <interactant intactId="EBI-13067820">
        <id>Q9NZD1</id>
    </interactant>
    <interactant intactId="EBI-720480">
        <id>P24593</id>
        <label>IGFBP5</label>
    </interactant>
    <organismsDiffer>false</organismsDiffer>
    <experiments>3</experiments>
</comment>
<comment type="interaction">
    <interactant intactId="EBI-13067820">
        <id>Q9NZD1</id>
    </interactant>
    <interactant intactId="EBI-2820517">
        <id>Q8TAF8</id>
        <label>LHFPL5</label>
    </interactant>
    <organismsDiffer>false</organismsDiffer>
    <experiments>3</experiments>
</comment>
<comment type="interaction">
    <interactant intactId="EBI-13067820">
        <id>Q9NZD1</id>
    </interactant>
    <interactant intactId="EBI-11304917">
        <id>Q8N386</id>
        <label>LRRC25</label>
    </interactant>
    <organismsDiffer>false</organismsDiffer>
    <experiments>3</experiments>
</comment>
<comment type="interaction">
    <interactant intactId="EBI-13067820">
        <id>Q9NZD1</id>
    </interactant>
    <interactant intactId="EBI-1266965">
        <id>Q9H2W1</id>
        <label>MS4A6A</label>
    </interactant>
    <organismsDiffer>false</organismsDiffer>
    <experiments>3</experiments>
</comment>
<comment type="interaction">
    <interactant intactId="EBI-13067820">
        <id>Q9NZD1</id>
    </interactant>
    <interactant intactId="EBI-12051377">
        <id>Q8N912</id>
        <label>NRAC</label>
    </interactant>
    <organismsDiffer>false</organismsDiffer>
    <experiments>3</experiments>
</comment>
<comment type="interaction">
    <interactant intactId="EBI-13067820">
        <id>Q9NZD1</id>
    </interactant>
    <interactant intactId="EBI-2804080">
        <id>Q99650</id>
        <label>OSMR</label>
    </interactant>
    <organismsDiffer>false</organismsDiffer>
    <experiments>3</experiments>
</comment>
<comment type="interaction">
    <interactant intactId="EBI-13067820">
        <id>Q9NZD1</id>
    </interactant>
    <interactant intactId="EBI-2845982">
        <id>Q01453</id>
        <label>PMP22</label>
    </interactant>
    <organismsDiffer>false</organismsDiffer>
    <experiments>3</experiments>
</comment>
<comment type="interaction">
    <interactant intactId="EBI-13067820">
        <id>Q9NZD1</id>
    </interactant>
    <interactant intactId="EBI-722696">
        <id>Q7Z6L0</id>
        <label>PRRT2</label>
    </interactant>
    <organismsDiffer>false</organismsDiffer>
    <experiments>3</experiments>
</comment>
<comment type="interaction">
    <interactant intactId="EBI-13067820">
        <id>Q9NZD1</id>
    </interactant>
    <interactant intactId="EBI-3919694">
        <id>P15151</id>
        <label>PVR</label>
    </interactant>
    <organismsDiffer>false</organismsDiffer>
    <experiments>3</experiments>
</comment>
<comment type="interaction">
    <interactant intactId="EBI-13067820">
        <id>Q9NZD1</id>
    </interactant>
    <interactant intactId="EBI-8644112">
        <id>Q9BRI3</id>
        <label>SLC30A2</label>
    </interactant>
    <organismsDiffer>false</organismsDiffer>
    <experiments>3</experiments>
</comment>
<comment type="interaction">
    <interactant intactId="EBI-13067820">
        <id>Q9NZD1</id>
    </interactant>
    <interactant intactId="EBI-12889586">
        <id>Q6ZP29-3</id>
        <label>SLC66A1</label>
    </interactant>
    <organismsDiffer>false</organismsDiffer>
    <experiments>3</experiments>
</comment>
<comment type="interaction">
    <interactant intactId="EBI-13067820">
        <id>Q9NZD1</id>
    </interactant>
    <interactant intactId="EBI-726331">
        <id>Q9H7V2</id>
        <label>SYNDIG1</label>
    </interactant>
    <organismsDiffer>false</organismsDiffer>
    <experiments>3</experiments>
</comment>
<comment type="interaction">
    <interactant intactId="EBI-13067820">
        <id>Q9NZD1</id>
    </interactant>
    <interactant intactId="EBI-10171534">
        <id>A0PK00</id>
        <label>TMEM120B</label>
    </interactant>
    <organismsDiffer>false</organismsDiffer>
    <experiments>3</experiments>
</comment>
<comment type="interaction">
    <interactant intactId="EBI-13067820">
        <id>Q9NZD1</id>
    </interactant>
    <interactant intactId="EBI-741829">
        <id>Q96HH6</id>
        <label>TMEM19</label>
    </interactant>
    <organismsDiffer>false</organismsDiffer>
    <experiments>3</experiments>
</comment>
<comment type="interaction">
    <interactant intactId="EBI-13067820">
        <id>Q9NZD1</id>
    </interactant>
    <interactant intactId="EBI-12876824">
        <id>Q9BTX3</id>
        <label>TMEM208</label>
    </interactant>
    <organismsDiffer>false</organismsDiffer>
    <experiments>3</experiments>
</comment>
<comment type="interaction">
    <interactant intactId="EBI-13067820">
        <id>Q9NZD1</id>
    </interactant>
    <interactant intactId="EBI-8649725">
        <id>Q9BSE2</id>
        <label>TMEM79</label>
    </interactant>
    <organismsDiffer>false</organismsDiffer>
    <experiments>3</experiments>
</comment>
<comment type="interaction">
    <interactant intactId="EBI-13067820">
        <id>Q9NZD1</id>
    </interactant>
    <interactant intactId="EBI-11988865">
        <id>A5PKU2</id>
        <label>TUSC5</label>
    </interactant>
    <organismsDiffer>false</organismsDiffer>
    <experiments>3</experiments>
</comment>
<comment type="interaction">
    <interactant intactId="EBI-13067820">
        <id>Q9NZD1</id>
    </interactant>
    <interactant intactId="EBI-10304067">
        <id>Q9GZX9</id>
        <label>TWSG1</label>
    </interactant>
    <organismsDiffer>false</organismsDiffer>
    <experiments>3</experiments>
</comment>
<comment type="interaction">
    <interactant intactId="EBI-13067820">
        <id>Q9NZD1</id>
    </interactant>
    <interactant intactId="EBI-4401271">
        <id>Q9H1C4</id>
        <label>UNC93B1</label>
    </interactant>
    <organismsDiffer>false</organismsDiffer>
    <experiments>3</experiments>
</comment>
<comment type="interaction">
    <interactant intactId="EBI-13067820">
        <id>Q9NZD1</id>
    </interactant>
    <interactant intactId="EBI-7850136">
        <id>Q9Y548</id>
        <label>YIPF1</label>
    </interactant>
    <organismsDiffer>false</organismsDiffer>
    <experiments>3</experiments>
</comment>
<comment type="subcellular location">
    <subcellularLocation>
        <location evidence="1">Cell membrane</location>
        <topology evidence="1">Multi-pass membrane protein</topology>
    </subcellularLocation>
</comment>
<comment type="alternative products">
    <event type="alternative splicing"/>
    <isoform>
        <id>Q9NZD1-1</id>
        <name>1</name>
        <sequence type="displayed"/>
    </isoform>
    <isoform>
        <id>Q9NZD1-2</id>
        <name>2</name>
        <sequence type="described" ref="VSP_010006 VSP_010007"/>
    </isoform>
    <isoform>
        <id>Q9NZD1-3</id>
        <name>3</name>
        <sequence type="described" ref="VSP_010008"/>
    </isoform>
</comment>
<comment type="tissue specificity">
    <text evidence="1">Widely expressed in the peripheral system. Expression pattern is high in pancreas, medium in kidney, small intestine, spleen and testis, low in lung, colon, leukocyte, prostate and thymus and not detectable in brain, heart, liver, placenta, skeletal muscle and ovary.</text>
</comment>
<comment type="similarity">
    <text evidence="6">Belongs to the G-protein coupled receptor 3 family.</text>
</comment>
<evidence type="ECO:0000269" key="1">
    <source>
    </source>
</evidence>
<evidence type="ECO:0000269" key="2">
    <source>
    </source>
</evidence>
<evidence type="ECO:0000269" key="3">
    <source>
    </source>
</evidence>
<evidence type="ECO:0000269" key="4">
    <source>
    </source>
</evidence>
<evidence type="ECO:0000303" key="5">
    <source ref="2"/>
</evidence>
<evidence type="ECO:0000305" key="6"/>
<evidence type="ECO:0007744" key="7">
    <source>
        <dbReference type="PDB" id="8YZK"/>
    </source>
</evidence>
<evidence type="ECO:0007744" key="8">
    <source>
        <dbReference type="PDB" id="9IMA"/>
    </source>
</evidence>
<evidence type="ECO:0007829" key="9">
    <source>
        <dbReference type="PDB" id="8YZK"/>
    </source>
</evidence>
<evidence type="ECO:0007829" key="10">
    <source>
        <dbReference type="PDB" id="9IMA"/>
    </source>
</evidence>
<feature type="chain" id="PRO_0000206897" description="G-protein coupled receptor family C group 5 member D">
    <location>
        <begin position="1"/>
        <end position="345"/>
    </location>
</feature>
<feature type="topological domain" description="Extracellular" evidence="3 4 7 8">
    <location>
        <begin position="1"/>
        <end position="27"/>
    </location>
</feature>
<feature type="transmembrane region" description="Helical; Name=1" evidence="3 4 7 8">
    <location>
        <begin position="28"/>
        <end position="48"/>
    </location>
</feature>
<feature type="topological domain" description="Cytoplasmic" evidence="3 4 7 8">
    <location>
        <begin position="49"/>
        <end position="63"/>
    </location>
</feature>
<feature type="transmembrane region" description="Helical; Name=2" evidence="3 4 7 8">
    <location>
        <begin position="64"/>
        <end position="84"/>
    </location>
</feature>
<feature type="topological domain" description="Extracellular" evidence="3 4 7 8">
    <location>
        <begin position="85"/>
        <end position="93"/>
    </location>
</feature>
<feature type="transmembrane region" description="Helical; Name=3" evidence="3 4 7 8">
    <location>
        <begin position="94"/>
        <end position="114"/>
    </location>
</feature>
<feature type="topological domain" description="Cytoplasmic" evidence="3 4 7 8">
    <location>
        <begin position="115"/>
        <end position="123"/>
    </location>
</feature>
<feature type="transmembrane region" description="Helical; Name=4" evidence="3 4 7 8">
    <location>
        <begin position="124"/>
        <end position="144"/>
    </location>
</feature>
<feature type="topological domain" description="Extracellular" evidence="3 4 7 8">
    <location>
        <begin position="145"/>
        <end position="167"/>
    </location>
</feature>
<feature type="transmembrane region" description="Helical; Name=5" evidence="3 4 7 8">
    <location>
        <begin position="168"/>
        <end position="188"/>
    </location>
</feature>
<feature type="topological domain" description="Cytoplasmic" evidence="3 4 7 8">
    <location>
        <begin position="189"/>
        <end position="204"/>
    </location>
</feature>
<feature type="transmembrane region" description="Helical; Name=6" evidence="3 4 7 8">
    <location>
        <begin position="205"/>
        <end position="225"/>
    </location>
</feature>
<feature type="topological domain" description="Extracellular" evidence="3 4 7 8">
    <location>
        <begin position="226"/>
        <end position="239"/>
    </location>
</feature>
<feature type="transmembrane region" description="Helical; Name=7" evidence="3 4 7 8">
    <location>
        <begin position="240"/>
        <end position="260"/>
    </location>
</feature>
<feature type="topological domain" description="Cytoplasmic" evidence="3 4 7 8">
    <location>
        <begin position="261"/>
        <end position="345"/>
    </location>
</feature>
<feature type="splice variant" id="VSP_010008" description="In isoform 3." evidence="6">
    <original>ARDSDGAEEDVALTSYGTPIQPQTVDPTQECFIPQAKLSPQQDAGGV</original>
    <variation>GTFLGDSGSREVLLQEKQEKNHAVG</variation>
    <location>
        <begin position="299"/>
        <end position="345"/>
    </location>
</feature>
<feature type="splice variant" id="VSP_010006" description="In isoform 2." evidence="5">
    <original>AR</original>
    <variation>DC</variation>
    <location>
        <begin position="299"/>
        <end position="300"/>
    </location>
</feature>
<feature type="splice variant" id="VSP_010007" description="In isoform 2." evidence="5">
    <location>
        <begin position="301"/>
        <end position="345"/>
    </location>
</feature>
<feature type="sequence variant" id="VAR_018297" description="In dbSNP:rs3741822.">
    <original>A</original>
    <variation>D</variation>
    <location>
        <position position="18"/>
    </location>
</feature>
<feature type="strand" evidence="9">
    <location>
        <begin position="9"/>
        <end position="13"/>
    </location>
</feature>
<feature type="turn" evidence="10">
    <location>
        <begin position="21"/>
        <end position="25"/>
    </location>
</feature>
<feature type="helix" evidence="10">
    <location>
        <begin position="26"/>
        <end position="48"/>
    </location>
</feature>
<feature type="turn" evidence="10">
    <location>
        <begin position="54"/>
        <end position="56"/>
    </location>
</feature>
<feature type="helix" evidence="10">
    <location>
        <begin position="57"/>
        <end position="59"/>
    </location>
</feature>
<feature type="helix" evidence="10">
    <location>
        <begin position="60"/>
        <end position="81"/>
    </location>
</feature>
<feature type="turn" evidence="10">
    <location>
        <begin position="85"/>
        <end position="88"/>
    </location>
</feature>
<feature type="helix" evidence="10">
    <location>
        <begin position="89"/>
        <end position="116"/>
    </location>
</feature>
<feature type="turn" evidence="10">
    <location>
        <begin position="117"/>
        <end position="120"/>
    </location>
</feature>
<feature type="helix" evidence="10">
    <location>
        <begin position="126"/>
        <end position="152"/>
    </location>
</feature>
<feature type="helix" evidence="10">
    <location>
        <begin position="158"/>
        <end position="160"/>
    </location>
</feature>
<feature type="helix" evidence="10">
    <location>
        <begin position="163"/>
        <end position="172"/>
    </location>
</feature>
<feature type="helix" evidence="10">
    <location>
        <begin position="175"/>
        <end position="190"/>
    </location>
</feature>
<feature type="strand" evidence="10">
    <location>
        <begin position="193"/>
        <end position="195"/>
    </location>
</feature>
<feature type="strand" evidence="10">
    <location>
        <begin position="197"/>
        <end position="199"/>
    </location>
</feature>
<feature type="helix" evidence="10">
    <location>
        <begin position="200"/>
        <end position="225"/>
    </location>
</feature>
<feature type="helix" evidence="10">
    <location>
        <begin position="227"/>
        <end position="230"/>
    </location>
</feature>
<feature type="turn" evidence="10">
    <location>
        <begin position="236"/>
        <end position="238"/>
    </location>
</feature>
<feature type="helix" evidence="10">
    <location>
        <begin position="239"/>
        <end position="256"/>
    </location>
</feature>
<feature type="helix" evidence="10">
    <location>
        <begin position="258"/>
        <end position="267"/>
    </location>
</feature>
<reference key="1">
    <citation type="journal article" date="2001" name="Biochim. Biophys. Acta">
        <title>Cloning and characterization of a human orphan family C G-protein coupled receptor GPRC5D.</title>
        <authorList>
            <person name="Braeuner-Osborne H."/>
            <person name="Jensen A.A."/>
            <person name="Sheppard P.O."/>
            <person name="Brodin B."/>
            <person name="Krogsgaard-Larsen P."/>
            <person name="O'Hara P."/>
        </authorList>
    </citation>
    <scope>NUCLEOTIDE SEQUENCE [MRNA] (ISOFORM 1)</scope>
    <scope>TISSUE SPECIFICITY</scope>
    <scope>SUBCELLULAR LOCATION</scope>
    <scope>INDUCTION</scope>
    <source>
        <tissue>Testis</tissue>
    </source>
</reference>
<reference key="2">
    <citation type="submission" date="2003-01" db="EMBL/GenBank/DDBJ databases">
        <title>Characterization of GPRC5D, a member of RAIG family in hard keratinized structures.</title>
        <authorList>
            <person name="Inoue S."/>
            <person name="Nanbu T."/>
            <person name="Shimomura T."/>
        </authorList>
    </citation>
    <scope>NUCLEOTIDE SEQUENCE [MRNA] (ISOFORM 2)</scope>
    <source>
        <tissue>Skin</tissue>
    </source>
</reference>
<reference key="3">
    <citation type="journal article" date="2002" name="FEBS Lett.">
        <title>Identification of G protein-coupled receptor genes from the human genome sequence.</title>
        <authorList>
            <person name="Takeda S."/>
            <person name="Kadowaki S."/>
            <person name="Haga T."/>
            <person name="Takaesu H."/>
            <person name="Mitaku S."/>
        </authorList>
    </citation>
    <scope>NUCLEOTIDE SEQUENCE [LARGE SCALE GENOMIC DNA] (ISOFORM 3)</scope>
</reference>
<reference key="4">
    <citation type="journal article" date="2004" name="Genome Res.">
        <title>The status, quality, and expansion of the NIH full-length cDNA project: the Mammalian Gene Collection (MGC).</title>
        <authorList>
            <consortium name="The MGC Project Team"/>
        </authorList>
    </citation>
    <scope>NUCLEOTIDE SEQUENCE [LARGE SCALE MRNA] (ISOFORM 1)</scope>
</reference>
<reference key="5">
    <citation type="journal article" date="2004" name="J. Invest. Dermatol.">
        <title>The RAIG family member, GPRC5D, is associated with hard-keratinized structures.</title>
        <authorList>
            <person name="Inoue S."/>
            <person name="Nambu T."/>
            <person name="Shimomura T."/>
        </authorList>
    </citation>
    <scope>FUNCTION</scope>
</reference>
<reference evidence="8" key="6">
    <citation type="journal article" date="2024" name="J. Mol. Biol.">
        <title>Structural Basis for the Recognition of GPRC5D by Talquetamab, a Bispecific Antibody for Multiple Myeloma.</title>
        <authorList>
            <person name="Jeong J."/>
            <person name="Park J."/>
            <person name="Young Mo G."/>
            <person name="Shin J."/>
            <person name="Cho Y."/>
        </authorList>
    </citation>
    <scope>STRUCTURE BY ELECTRON MICROSCOPY (2.65 ANGSTROMS) OF 1-308 IN COMPLEX WITH CHOLESTEROL AND ANTIBODIES</scope>
    <scope>SUBUNIT</scope>
    <scope>TOPOLOGY</scope>
</reference>
<reference evidence="7" key="7">
    <citation type="journal article" date="2024" name="Nat. Commun.">
        <title>The binding mechanism of an anti-multiple myeloma antibody to the human GPRC5D homodimer.</title>
        <authorList>
            <person name="Yan P."/>
            <person name="Lin X."/>
            <person name="Wu L."/>
            <person name="Xu L."/>
            <person name="Li F."/>
            <person name="Liu J."/>
            <person name="Xu F."/>
        </authorList>
    </citation>
    <scope>STRUCTURE BY ELECTRON MICROSCOPY (3.40 ANGSTROMS) OF 1-268 IN COMPLEX WITH ANTIBODIES</scope>
    <scope>SUBUNIT</scope>
    <scope>TOPOLOGY</scope>
</reference>
<proteinExistence type="evidence at protein level"/>
<accession>Q9NZD1</accession>
<accession>Q3KNV3</accession>
<accession>Q7Z5J9</accession>
<accession>Q8TDS6</accession>
<sequence>MYKDCIESTGDYFLLCDAEGPWGIILESLAILGIVVTILLLLAFLFLMRKIQDCSQWNVLPTQLLFLLSVLGLFGLAFAFIIELNQQTAPVRYFLFGVLFALCFSCLLAHASNLVKLVRGCVSFSWTTILCIAIGCSLLQIIIATEYVTLIMTRGMMFVNMTPCQLNVDFVVLLVYVLFLMALTFFVSKATFCGPCENWKQHGRLIFITVLFSIIIWVVWISMLLRGNPQFQRQPQWDDPVVCIALVTNAWVFLLLYIVPELCILYRSCRQECPLQGNACPVTAYQHSFQVENQELSRARDSDGAEEDVALTSYGTPIQPQTVDPTQECFIPQAKLSPQQDAGGV</sequence>
<organism>
    <name type="scientific">Homo sapiens</name>
    <name type="common">Human</name>
    <dbReference type="NCBI Taxonomy" id="9606"/>
    <lineage>
        <taxon>Eukaryota</taxon>
        <taxon>Metazoa</taxon>
        <taxon>Chordata</taxon>
        <taxon>Craniata</taxon>
        <taxon>Vertebrata</taxon>
        <taxon>Euteleostomi</taxon>
        <taxon>Mammalia</taxon>
        <taxon>Eutheria</taxon>
        <taxon>Euarchontoglires</taxon>
        <taxon>Primates</taxon>
        <taxon>Haplorrhini</taxon>
        <taxon>Catarrhini</taxon>
        <taxon>Hominidae</taxon>
        <taxon>Homo</taxon>
    </lineage>
</organism>
<keyword id="KW-0002">3D-structure</keyword>
<keyword id="KW-0025">Alternative splicing</keyword>
<keyword id="KW-1003">Cell membrane</keyword>
<keyword id="KW-0297">G-protein coupled receptor</keyword>
<keyword id="KW-0472">Membrane</keyword>
<keyword id="KW-1267">Proteomics identification</keyword>
<keyword id="KW-0675">Receptor</keyword>
<keyword id="KW-1185">Reference proteome</keyword>
<keyword id="KW-0807">Transducer</keyword>
<keyword id="KW-0812">Transmembrane</keyword>
<keyword id="KW-1133">Transmembrane helix</keyword>